<keyword id="KW-0119">Carbohydrate metabolism</keyword>
<keyword id="KW-0320">Glycogen biosynthesis</keyword>
<keyword id="KW-0321">Glycogen metabolism</keyword>
<keyword id="KW-0328">Glycosyltransferase</keyword>
<keyword id="KW-0808">Transferase</keyword>
<dbReference type="EC" id="2.4.1.18" evidence="1"/>
<dbReference type="EMBL" id="CP000891">
    <property type="protein sequence ID" value="ABX48532.1"/>
    <property type="molecule type" value="Genomic_DNA"/>
</dbReference>
<dbReference type="RefSeq" id="WP_006085127.1">
    <property type="nucleotide sequence ID" value="NC_009997.1"/>
</dbReference>
<dbReference type="SMR" id="A9KTJ1"/>
<dbReference type="CAZy" id="CBM48">
    <property type="family name" value="Carbohydrate-Binding Module Family 48"/>
</dbReference>
<dbReference type="CAZy" id="GH13">
    <property type="family name" value="Glycoside Hydrolase Family 13"/>
</dbReference>
<dbReference type="GeneID" id="11771614"/>
<dbReference type="KEGG" id="sbn:Sbal195_1357"/>
<dbReference type="HOGENOM" id="CLU_004245_3_2_6"/>
<dbReference type="UniPathway" id="UPA00164"/>
<dbReference type="Proteomes" id="UP000000770">
    <property type="component" value="Chromosome"/>
</dbReference>
<dbReference type="GO" id="GO:0005829">
    <property type="term" value="C:cytosol"/>
    <property type="evidence" value="ECO:0007669"/>
    <property type="project" value="TreeGrafter"/>
</dbReference>
<dbReference type="GO" id="GO:0003844">
    <property type="term" value="F:1,4-alpha-glucan branching enzyme activity"/>
    <property type="evidence" value="ECO:0007669"/>
    <property type="project" value="UniProtKB-UniRule"/>
</dbReference>
<dbReference type="GO" id="GO:0043169">
    <property type="term" value="F:cation binding"/>
    <property type="evidence" value="ECO:0007669"/>
    <property type="project" value="InterPro"/>
</dbReference>
<dbReference type="GO" id="GO:0004553">
    <property type="term" value="F:hydrolase activity, hydrolyzing O-glycosyl compounds"/>
    <property type="evidence" value="ECO:0007669"/>
    <property type="project" value="InterPro"/>
</dbReference>
<dbReference type="GO" id="GO:0005978">
    <property type="term" value="P:glycogen biosynthetic process"/>
    <property type="evidence" value="ECO:0007669"/>
    <property type="project" value="UniProtKB-UniRule"/>
</dbReference>
<dbReference type="CDD" id="cd11322">
    <property type="entry name" value="AmyAc_Glg_BE"/>
    <property type="match status" value="1"/>
</dbReference>
<dbReference type="CDD" id="cd02855">
    <property type="entry name" value="E_set_GBE_prok_N"/>
    <property type="match status" value="1"/>
</dbReference>
<dbReference type="FunFam" id="2.60.40.10:FF:000169">
    <property type="entry name" value="1,4-alpha-glucan branching enzyme GlgB"/>
    <property type="match status" value="1"/>
</dbReference>
<dbReference type="FunFam" id="2.60.40.1180:FF:000002">
    <property type="entry name" value="1,4-alpha-glucan branching enzyme GlgB"/>
    <property type="match status" value="1"/>
</dbReference>
<dbReference type="FunFam" id="3.20.20.80:FF:000003">
    <property type="entry name" value="1,4-alpha-glucan branching enzyme GlgB"/>
    <property type="match status" value="1"/>
</dbReference>
<dbReference type="Gene3D" id="3.20.20.80">
    <property type="entry name" value="Glycosidases"/>
    <property type="match status" value="1"/>
</dbReference>
<dbReference type="Gene3D" id="2.60.40.1180">
    <property type="entry name" value="Golgi alpha-mannosidase II"/>
    <property type="match status" value="1"/>
</dbReference>
<dbReference type="Gene3D" id="2.60.40.10">
    <property type="entry name" value="Immunoglobulins"/>
    <property type="match status" value="1"/>
</dbReference>
<dbReference type="HAMAP" id="MF_00685">
    <property type="entry name" value="GlgB"/>
    <property type="match status" value="1"/>
</dbReference>
<dbReference type="InterPro" id="IPR006048">
    <property type="entry name" value="A-amylase/branching_C"/>
</dbReference>
<dbReference type="InterPro" id="IPR037439">
    <property type="entry name" value="Branching_enzy"/>
</dbReference>
<dbReference type="InterPro" id="IPR006407">
    <property type="entry name" value="GlgB"/>
</dbReference>
<dbReference type="InterPro" id="IPR054169">
    <property type="entry name" value="GlgB_N"/>
</dbReference>
<dbReference type="InterPro" id="IPR044143">
    <property type="entry name" value="GlgB_N_E_set_prok"/>
</dbReference>
<dbReference type="InterPro" id="IPR006047">
    <property type="entry name" value="Glyco_hydro_13_cat_dom"/>
</dbReference>
<dbReference type="InterPro" id="IPR004193">
    <property type="entry name" value="Glyco_hydro_13_N"/>
</dbReference>
<dbReference type="InterPro" id="IPR013780">
    <property type="entry name" value="Glyco_hydro_b"/>
</dbReference>
<dbReference type="InterPro" id="IPR017853">
    <property type="entry name" value="Glycoside_hydrolase_SF"/>
</dbReference>
<dbReference type="InterPro" id="IPR013783">
    <property type="entry name" value="Ig-like_fold"/>
</dbReference>
<dbReference type="InterPro" id="IPR014756">
    <property type="entry name" value="Ig_E-set"/>
</dbReference>
<dbReference type="NCBIfam" id="TIGR01515">
    <property type="entry name" value="branching_enzym"/>
    <property type="match status" value="1"/>
</dbReference>
<dbReference type="NCBIfam" id="NF003811">
    <property type="entry name" value="PRK05402.1"/>
    <property type="match status" value="1"/>
</dbReference>
<dbReference type="NCBIfam" id="NF008967">
    <property type="entry name" value="PRK12313.1"/>
    <property type="match status" value="1"/>
</dbReference>
<dbReference type="PANTHER" id="PTHR43651">
    <property type="entry name" value="1,4-ALPHA-GLUCAN-BRANCHING ENZYME"/>
    <property type="match status" value="1"/>
</dbReference>
<dbReference type="PANTHER" id="PTHR43651:SF3">
    <property type="entry name" value="1,4-ALPHA-GLUCAN-BRANCHING ENZYME"/>
    <property type="match status" value="1"/>
</dbReference>
<dbReference type="Pfam" id="PF00128">
    <property type="entry name" value="Alpha-amylase"/>
    <property type="match status" value="1"/>
</dbReference>
<dbReference type="Pfam" id="PF02806">
    <property type="entry name" value="Alpha-amylase_C"/>
    <property type="match status" value="1"/>
</dbReference>
<dbReference type="Pfam" id="PF02922">
    <property type="entry name" value="CBM_48"/>
    <property type="match status" value="1"/>
</dbReference>
<dbReference type="Pfam" id="PF22019">
    <property type="entry name" value="GlgB_N"/>
    <property type="match status" value="1"/>
</dbReference>
<dbReference type="PIRSF" id="PIRSF000463">
    <property type="entry name" value="GlgB"/>
    <property type="match status" value="1"/>
</dbReference>
<dbReference type="SMART" id="SM00642">
    <property type="entry name" value="Aamy"/>
    <property type="match status" value="1"/>
</dbReference>
<dbReference type="SUPFAM" id="SSF51445">
    <property type="entry name" value="(Trans)glycosidases"/>
    <property type="match status" value="1"/>
</dbReference>
<dbReference type="SUPFAM" id="SSF81296">
    <property type="entry name" value="E set domains"/>
    <property type="match status" value="2"/>
</dbReference>
<dbReference type="SUPFAM" id="SSF51011">
    <property type="entry name" value="Glycosyl hydrolase domain"/>
    <property type="match status" value="1"/>
</dbReference>
<evidence type="ECO:0000255" key="1">
    <source>
        <dbReference type="HAMAP-Rule" id="MF_00685"/>
    </source>
</evidence>
<feature type="chain" id="PRO_1000083071" description="1,4-alpha-glucan branching enzyme GlgB">
    <location>
        <begin position="1"/>
        <end position="743"/>
    </location>
</feature>
<feature type="active site" description="Nucleophile" evidence="1">
    <location>
        <position position="416"/>
    </location>
</feature>
<feature type="active site" description="Proton donor" evidence="1">
    <location>
        <position position="469"/>
    </location>
</feature>
<proteinExistence type="inferred from homology"/>
<gene>
    <name evidence="1" type="primary">glgB</name>
    <name type="ordered locus">Sbal195_1357</name>
</gene>
<comment type="function">
    <text evidence="1">Catalyzes the formation of the alpha-1,6-glucosidic linkages in glycogen by scission of a 1,4-alpha-linked oligosaccharide from growing alpha-1,4-glucan chains and the subsequent attachment of the oligosaccharide to the alpha-1,6 position.</text>
</comment>
<comment type="catalytic activity">
    <reaction evidence="1">
        <text>Transfers a segment of a (1-&gt;4)-alpha-D-glucan chain to a primary hydroxy group in a similar glucan chain.</text>
        <dbReference type="EC" id="2.4.1.18"/>
    </reaction>
</comment>
<comment type="pathway">
    <text evidence="1">Glycan biosynthesis; glycogen biosynthesis.</text>
</comment>
<comment type="subunit">
    <text evidence="1">Monomer.</text>
</comment>
<comment type="similarity">
    <text evidence="1">Belongs to the glycosyl hydrolase 13 family. GlgB subfamily.</text>
</comment>
<accession>A9KTJ1</accession>
<organism>
    <name type="scientific">Shewanella baltica (strain OS195)</name>
    <dbReference type="NCBI Taxonomy" id="399599"/>
    <lineage>
        <taxon>Bacteria</taxon>
        <taxon>Pseudomonadati</taxon>
        <taxon>Pseudomonadota</taxon>
        <taxon>Gammaproteobacteria</taxon>
        <taxon>Alteromonadales</taxon>
        <taxon>Shewanellaceae</taxon>
        <taxon>Shewanella</taxon>
    </lineage>
</organism>
<name>GLGB_SHEB9</name>
<reference key="1">
    <citation type="submission" date="2007-11" db="EMBL/GenBank/DDBJ databases">
        <title>Complete sequence of chromosome of Shewanella baltica OS195.</title>
        <authorList>
            <consortium name="US DOE Joint Genome Institute"/>
            <person name="Copeland A."/>
            <person name="Lucas S."/>
            <person name="Lapidus A."/>
            <person name="Barry K."/>
            <person name="Glavina del Rio T."/>
            <person name="Dalin E."/>
            <person name="Tice H."/>
            <person name="Pitluck S."/>
            <person name="Chain P."/>
            <person name="Malfatti S."/>
            <person name="Shin M."/>
            <person name="Vergez L."/>
            <person name="Schmutz J."/>
            <person name="Larimer F."/>
            <person name="Land M."/>
            <person name="Hauser L."/>
            <person name="Kyrpides N."/>
            <person name="Kim E."/>
            <person name="Brettar I."/>
            <person name="Rodrigues J."/>
            <person name="Konstantinidis K."/>
            <person name="Klappenbach J."/>
            <person name="Hofle M."/>
            <person name="Tiedje J."/>
            <person name="Richardson P."/>
        </authorList>
    </citation>
    <scope>NUCLEOTIDE SEQUENCE [LARGE SCALE GENOMIC DNA]</scope>
    <source>
        <strain>OS195</strain>
    </source>
</reference>
<sequence>MMTQANAYFYDGADVALLNGQYTDVFSLLGMHSANEGKALIVRCFLRNALSVDVISIKDGRKVASLDKVNEQGLFAGTLGRRVKPFLYLLRVEYPLCQLDIVDPYQFDSLLNSDDIYLFGEGSAERAYEFLGANWRQTQGVEGVHFCVWAPNAKRVSVVGDFNHWDDTRHVMRQHLANGLWELFLPNVVEGAHYKFDLVYQNGERHTKSDPMATQMECAPHNASIVPPKAHHSWNDTAWMSKRAATAWHKAPMSAYEVHLGSWRRKGEQGEQYLDYQDLIEQLIPYVKEQGFTHIELMPISEFPFDGSWGYQPVGLYAPTHRFGDANGLKAFVDACHQAGIGIILDWVSAHFPKDPHGLVRFDGTCLYEHEDPRKGTHPDWDTLIYNYDRGEVRSFLLSNACYWLREFHFDGLRLDAVSSMLYLDYSREPGQWLPNAYGGRENLEAISFLQILNQRLYQAFPGICMIAEESTAFAGVTKPTDQQGLGFGFKWNMGWMNDSLSYLGRDPLYRQFHHHQLTFSLMYAYTEQFMLSVSHDEVVHGKGSLLHKIPGDDWQKFATLRAYYGFMWGHPGKKLLFMGCEFGQRNEWNHNQSLDWHLLAYEPHQGVQRWLKDLNQLYQDMPALSVQDYEGAGFSWLDCENSRDSIFTFVRYGLAGDAPLVFVINMTPQLHTGFRIGLPLAGDYREYLNSDSQIYGGSNQGNAGTVVAESLPWQGMAQSALITVPPLGCLVIGPATGLAEAN</sequence>
<protein>
    <recommendedName>
        <fullName evidence="1">1,4-alpha-glucan branching enzyme GlgB</fullName>
        <ecNumber evidence="1">2.4.1.18</ecNumber>
    </recommendedName>
    <alternativeName>
        <fullName evidence="1">1,4-alpha-D-glucan:1,4-alpha-D-glucan 6-glucosyl-transferase</fullName>
    </alternativeName>
    <alternativeName>
        <fullName evidence="1">Alpha-(1-&gt;4)-glucan branching enzyme</fullName>
    </alternativeName>
    <alternativeName>
        <fullName evidence="1">Glycogen branching enzyme</fullName>
        <shortName evidence="1">BE</shortName>
    </alternativeName>
</protein>